<dbReference type="EMBL" id="BX936398">
    <property type="protein sequence ID" value="CAH21336.1"/>
    <property type="molecule type" value="Genomic_DNA"/>
</dbReference>
<dbReference type="RefSeq" id="WP_011192434.1">
    <property type="nucleotide sequence ID" value="NC_006155.1"/>
</dbReference>
<dbReference type="SMR" id="Q66AN2"/>
<dbReference type="KEGG" id="ypo:BZ17_364"/>
<dbReference type="KEGG" id="yps:YPTB2098"/>
<dbReference type="PATRIC" id="fig|273123.14.peg.391"/>
<dbReference type="Proteomes" id="UP000001011">
    <property type="component" value="Chromosome"/>
</dbReference>
<dbReference type="Gene3D" id="3.10.450.50">
    <property type="match status" value="1"/>
</dbReference>
<dbReference type="HAMAP" id="MF_00612">
    <property type="entry name" value="UPF0225"/>
    <property type="match status" value="1"/>
</dbReference>
<dbReference type="InterPro" id="IPR032710">
    <property type="entry name" value="NTF2-like_dom_sf"/>
</dbReference>
<dbReference type="InterPro" id="IPR004027">
    <property type="entry name" value="SEC_C_motif"/>
</dbReference>
<dbReference type="InterPro" id="IPR023006">
    <property type="entry name" value="UPF0225"/>
</dbReference>
<dbReference type="InterPro" id="IPR048469">
    <property type="entry name" value="YchJ-like_M"/>
</dbReference>
<dbReference type="NCBIfam" id="NF002449">
    <property type="entry name" value="PRK01617.1"/>
    <property type="match status" value="1"/>
</dbReference>
<dbReference type="NCBIfam" id="NF002486">
    <property type="entry name" value="PRK01752.1"/>
    <property type="match status" value="1"/>
</dbReference>
<dbReference type="PANTHER" id="PTHR33747:SF1">
    <property type="entry name" value="ADENYLATE CYCLASE-ASSOCIATED CAP C-TERMINAL DOMAIN-CONTAINING PROTEIN"/>
    <property type="match status" value="1"/>
</dbReference>
<dbReference type="PANTHER" id="PTHR33747">
    <property type="entry name" value="UPF0225 PROTEIN SCO1677"/>
    <property type="match status" value="1"/>
</dbReference>
<dbReference type="Pfam" id="PF02810">
    <property type="entry name" value="SEC-C"/>
    <property type="match status" value="2"/>
</dbReference>
<dbReference type="Pfam" id="PF17775">
    <property type="entry name" value="YchJ_M-like"/>
    <property type="match status" value="1"/>
</dbReference>
<dbReference type="SUPFAM" id="SSF54427">
    <property type="entry name" value="NTF2-like"/>
    <property type="match status" value="1"/>
</dbReference>
<dbReference type="SUPFAM" id="SSF103642">
    <property type="entry name" value="Sec-C motif"/>
    <property type="match status" value="1"/>
</dbReference>
<name>Y2098_YERPS</name>
<gene>
    <name type="ordered locus">YPTB2098</name>
</gene>
<protein>
    <recommendedName>
        <fullName evidence="1">UPF0225 protein YPTB2098</fullName>
    </recommendedName>
</protein>
<accession>Q66AN2</accession>
<feature type="chain" id="PRO_1000056753" description="UPF0225 protein YPTB2098">
    <location>
        <begin position="1"/>
        <end position="154"/>
    </location>
</feature>
<reference key="1">
    <citation type="journal article" date="2004" name="Proc. Natl. Acad. Sci. U.S.A.">
        <title>Insights into the evolution of Yersinia pestis through whole-genome comparison with Yersinia pseudotuberculosis.</title>
        <authorList>
            <person name="Chain P.S.G."/>
            <person name="Carniel E."/>
            <person name="Larimer F.W."/>
            <person name="Lamerdin J."/>
            <person name="Stoutland P.O."/>
            <person name="Regala W.M."/>
            <person name="Georgescu A.M."/>
            <person name="Vergez L.M."/>
            <person name="Land M.L."/>
            <person name="Motin V.L."/>
            <person name="Brubaker R.R."/>
            <person name="Fowler J."/>
            <person name="Hinnebusch J."/>
            <person name="Marceau M."/>
            <person name="Medigue C."/>
            <person name="Simonet M."/>
            <person name="Chenal-Francisque V."/>
            <person name="Souza B."/>
            <person name="Dacheux D."/>
            <person name="Elliott J.M."/>
            <person name="Derbise A."/>
            <person name="Hauser L.J."/>
            <person name="Garcia E."/>
        </authorList>
    </citation>
    <scope>NUCLEOTIDE SEQUENCE [LARGE SCALE GENOMIC DNA]</scope>
    <source>
        <strain>IP32953</strain>
    </source>
</reference>
<sequence>MSELCPCGSILNYHECCGPYILGTQVAAKPAILMRSRYCAYVEKNVDYLIATWHPDCHAQEWRESIIQGFTKTVWHGLTVIAETPGRHPDEAFVEFISRFTDADNAQITAMHERSRFLRIKEHWYYIDGIRPSLGRNDTCLCGSGKKHKKCCGR</sequence>
<evidence type="ECO:0000255" key="1">
    <source>
        <dbReference type="HAMAP-Rule" id="MF_00612"/>
    </source>
</evidence>
<proteinExistence type="inferred from homology"/>
<comment type="similarity">
    <text evidence="1">Belongs to the UPF0225 family.</text>
</comment>
<organism>
    <name type="scientific">Yersinia pseudotuberculosis serotype I (strain IP32953)</name>
    <dbReference type="NCBI Taxonomy" id="273123"/>
    <lineage>
        <taxon>Bacteria</taxon>
        <taxon>Pseudomonadati</taxon>
        <taxon>Pseudomonadota</taxon>
        <taxon>Gammaproteobacteria</taxon>
        <taxon>Enterobacterales</taxon>
        <taxon>Yersiniaceae</taxon>
        <taxon>Yersinia</taxon>
    </lineage>
</organism>